<protein>
    <recommendedName>
        <fullName evidence="1">Cytidylate kinase</fullName>
        <shortName evidence="1">CK</shortName>
        <ecNumber evidence="1">2.7.4.25</ecNumber>
    </recommendedName>
    <alternativeName>
        <fullName evidence="1">Cytidine monophosphate kinase</fullName>
        <shortName evidence="1">CMP kinase</shortName>
    </alternativeName>
</protein>
<feature type="chain" id="PRO_1000048281" description="Cytidylate kinase">
    <location>
        <begin position="1"/>
        <end position="230"/>
    </location>
</feature>
<feature type="binding site" evidence="1">
    <location>
        <begin position="12"/>
        <end position="20"/>
    </location>
    <ligand>
        <name>ATP</name>
        <dbReference type="ChEBI" id="CHEBI:30616"/>
    </ligand>
</feature>
<name>KCY_SHESW</name>
<sequence length="230" mass="25203">MSERAPVVTIDGPSGAGKGTISQLLAQHLGWQLLDSGAIYRVLALAAIHHDVELENEESITLLAAHLDVKFLTGNDKDPVQVILEGEDVTTDIRTQECSNAASKVAAFPRVREALLRRQRAFRTAPGLIADGRDMGTVVFPTAPAKLYLTASAEERAQRRYNQLQDKGFDVNIERLLSEIIERDERDMNRPVAPLVPAEDAFVIDTSGKGIDEVLELALKHINEKLSSAN</sequence>
<comment type="catalytic activity">
    <reaction evidence="1">
        <text>CMP + ATP = CDP + ADP</text>
        <dbReference type="Rhea" id="RHEA:11600"/>
        <dbReference type="ChEBI" id="CHEBI:30616"/>
        <dbReference type="ChEBI" id="CHEBI:58069"/>
        <dbReference type="ChEBI" id="CHEBI:60377"/>
        <dbReference type="ChEBI" id="CHEBI:456216"/>
        <dbReference type="EC" id="2.7.4.25"/>
    </reaction>
</comment>
<comment type="catalytic activity">
    <reaction evidence="1">
        <text>dCMP + ATP = dCDP + ADP</text>
        <dbReference type="Rhea" id="RHEA:25094"/>
        <dbReference type="ChEBI" id="CHEBI:30616"/>
        <dbReference type="ChEBI" id="CHEBI:57566"/>
        <dbReference type="ChEBI" id="CHEBI:58593"/>
        <dbReference type="ChEBI" id="CHEBI:456216"/>
        <dbReference type="EC" id="2.7.4.25"/>
    </reaction>
</comment>
<comment type="subcellular location">
    <subcellularLocation>
        <location evidence="1">Cytoplasm</location>
    </subcellularLocation>
</comment>
<comment type="similarity">
    <text evidence="1">Belongs to the cytidylate kinase family. Type 1 subfamily.</text>
</comment>
<dbReference type="EC" id="2.7.4.25" evidence="1"/>
<dbReference type="EMBL" id="CP000503">
    <property type="protein sequence ID" value="ABM24804.1"/>
    <property type="molecule type" value="Genomic_DNA"/>
</dbReference>
<dbReference type="RefSeq" id="WP_011789295.1">
    <property type="nucleotide sequence ID" value="NC_008750.1"/>
</dbReference>
<dbReference type="SMR" id="A1RJF9"/>
<dbReference type="KEGG" id="shw:Sputw3181_1970"/>
<dbReference type="HOGENOM" id="CLU_079959_2_0_6"/>
<dbReference type="Proteomes" id="UP000002597">
    <property type="component" value="Chromosome"/>
</dbReference>
<dbReference type="GO" id="GO:0005829">
    <property type="term" value="C:cytosol"/>
    <property type="evidence" value="ECO:0007669"/>
    <property type="project" value="TreeGrafter"/>
</dbReference>
<dbReference type="GO" id="GO:0005524">
    <property type="term" value="F:ATP binding"/>
    <property type="evidence" value="ECO:0007669"/>
    <property type="project" value="UniProtKB-UniRule"/>
</dbReference>
<dbReference type="GO" id="GO:0036430">
    <property type="term" value="F:CMP kinase activity"/>
    <property type="evidence" value="ECO:0007669"/>
    <property type="project" value="RHEA"/>
</dbReference>
<dbReference type="GO" id="GO:0036431">
    <property type="term" value="F:dCMP kinase activity"/>
    <property type="evidence" value="ECO:0007669"/>
    <property type="project" value="RHEA"/>
</dbReference>
<dbReference type="GO" id="GO:0015949">
    <property type="term" value="P:nucleobase-containing small molecule interconversion"/>
    <property type="evidence" value="ECO:0007669"/>
    <property type="project" value="TreeGrafter"/>
</dbReference>
<dbReference type="GO" id="GO:0006220">
    <property type="term" value="P:pyrimidine nucleotide metabolic process"/>
    <property type="evidence" value="ECO:0007669"/>
    <property type="project" value="UniProtKB-UniRule"/>
</dbReference>
<dbReference type="CDD" id="cd02020">
    <property type="entry name" value="CMPK"/>
    <property type="match status" value="1"/>
</dbReference>
<dbReference type="FunFam" id="3.40.50.300:FF:000262">
    <property type="entry name" value="Cytidylate kinase"/>
    <property type="match status" value="1"/>
</dbReference>
<dbReference type="Gene3D" id="3.40.50.300">
    <property type="entry name" value="P-loop containing nucleotide triphosphate hydrolases"/>
    <property type="match status" value="1"/>
</dbReference>
<dbReference type="HAMAP" id="MF_00238">
    <property type="entry name" value="Cytidyl_kinase_type1"/>
    <property type="match status" value="1"/>
</dbReference>
<dbReference type="InterPro" id="IPR003136">
    <property type="entry name" value="Cytidylate_kin"/>
</dbReference>
<dbReference type="InterPro" id="IPR011994">
    <property type="entry name" value="Cytidylate_kinase_dom"/>
</dbReference>
<dbReference type="InterPro" id="IPR027417">
    <property type="entry name" value="P-loop_NTPase"/>
</dbReference>
<dbReference type="NCBIfam" id="TIGR00017">
    <property type="entry name" value="cmk"/>
    <property type="match status" value="1"/>
</dbReference>
<dbReference type="PANTHER" id="PTHR21299:SF2">
    <property type="entry name" value="CYTIDYLATE KINASE"/>
    <property type="match status" value="1"/>
</dbReference>
<dbReference type="PANTHER" id="PTHR21299">
    <property type="entry name" value="CYTIDYLATE KINASE/PANTOATE-BETA-ALANINE LIGASE"/>
    <property type="match status" value="1"/>
</dbReference>
<dbReference type="Pfam" id="PF02224">
    <property type="entry name" value="Cytidylate_kin"/>
    <property type="match status" value="1"/>
</dbReference>
<dbReference type="SUPFAM" id="SSF52540">
    <property type="entry name" value="P-loop containing nucleoside triphosphate hydrolases"/>
    <property type="match status" value="1"/>
</dbReference>
<proteinExistence type="inferred from homology"/>
<gene>
    <name evidence="1" type="primary">cmk</name>
    <name type="ordered locus">Sputw3181_1970</name>
</gene>
<accession>A1RJF9</accession>
<keyword id="KW-0067">ATP-binding</keyword>
<keyword id="KW-0963">Cytoplasm</keyword>
<keyword id="KW-0418">Kinase</keyword>
<keyword id="KW-0547">Nucleotide-binding</keyword>
<keyword id="KW-0808">Transferase</keyword>
<evidence type="ECO:0000255" key="1">
    <source>
        <dbReference type="HAMAP-Rule" id="MF_00238"/>
    </source>
</evidence>
<reference key="1">
    <citation type="submission" date="2006-12" db="EMBL/GenBank/DDBJ databases">
        <title>Complete sequence of Shewanella sp. W3-18-1.</title>
        <authorList>
            <consortium name="US DOE Joint Genome Institute"/>
            <person name="Copeland A."/>
            <person name="Lucas S."/>
            <person name="Lapidus A."/>
            <person name="Barry K."/>
            <person name="Detter J.C."/>
            <person name="Glavina del Rio T."/>
            <person name="Hammon N."/>
            <person name="Israni S."/>
            <person name="Dalin E."/>
            <person name="Tice H."/>
            <person name="Pitluck S."/>
            <person name="Chain P."/>
            <person name="Malfatti S."/>
            <person name="Shin M."/>
            <person name="Vergez L."/>
            <person name="Schmutz J."/>
            <person name="Larimer F."/>
            <person name="Land M."/>
            <person name="Hauser L."/>
            <person name="Kyrpides N."/>
            <person name="Lykidis A."/>
            <person name="Tiedje J."/>
            <person name="Richardson P."/>
        </authorList>
    </citation>
    <scope>NUCLEOTIDE SEQUENCE [LARGE SCALE GENOMIC DNA]</scope>
    <source>
        <strain>W3-18-1</strain>
    </source>
</reference>
<organism>
    <name type="scientific">Shewanella sp. (strain W3-18-1)</name>
    <dbReference type="NCBI Taxonomy" id="351745"/>
    <lineage>
        <taxon>Bacteria</taxon>
        <taxon>Pseudomonadati</taxon>
        <taxon>Pseudomonadota</taxon>
        <taxon>Gammaproteobacteria</taxon>
        <taxon>Alteromonadales</taxon>
        <taxon>Shewanellaceae</taxon>
        <taxon>Shewanella</taxon>
    </lineage>
</organism>